<proteinExistence type="inferred from homology"/>
<reference key="1">
    <citation type="journal article" date="2002" name="Lancet">
        <title>Genome and virulence determinants of high virulence community-acquired MRSA.</title>
        <authorList>
            <person name="Baba T."/>
            <person name="Takeuchi F."/>
            <person name="Kuroda M."/>
            <person name="Yuzawa H."/>
            <person name="Aoki K."/>
            <person name="Oguchi A."/>
            <person name="Nagai Y."/>
            <person name="Iwama N."/>
            <person name="Asano K."/>
            <person name="Naimi T."/>
            <person name="Kuroda H."/>
            <person name="Cui L."/>
            <person name="Yamamoto K."/>
            <person name="Hiramatsu K."/>
        </authorList>
    </citation>
    <scope>NUCLEOTIDE SEQUENCE [LARGE SCALE GENOMIC DNA]</scope>
    <source>
        <strain>MW2</strain>
    </source>
</reference>
<sequence length="315" mass="34887">MRKRARIIYNPTSGKELFKRELPDALIKLEKAGYETSAYATEKIGDATLEAERAMHENYDVLIAAGGDGTLNEVVNGIAEKPNRPKLGVIPMGTVNDFGRALHIPNDIMGALDVIIEGHSTKVDIGKMNNRYFINLAAGGQLTQVSYETPSKLKSIVGPFAYYIKGFEMLPQMKAVDLRIEYDGNVFQGEALLFFLGLTNSMAGFEKLVPDAKLDDGYFTLIIVEKSNLAELGHIMTLASRGEHTKHPKVIYEKAKAINISSFTDLQLNVDGEYGGKLPANFLNLERHIDVFAPNDIVNEELINNDHVDDNLIEE</sequence>
<keyword id="KW-0067">ATP-binding</keyword>
<keyword id="KW-0418">Kinase</keyword>
<keyword id="KW-0444">Lipid biosynthesis</keyword>
<keyword id="KW-0443">Lipid metabolism</keyword>
<keyword id="KW-0460">Magnesium</keyword>
<keyword id="KW-0479">Metal-binding</keyword>
<keyword id="KW-0547">Nucleotide-binding</keyword>
<keyword id="KW-0594">Phospholipid biosynthesis</keyword>
<keyword id="KW-1208">Phospholipid metabolism</keyword>
<keyword id="KW-0808">Transferase</keyword>
<organism>
    <name type="scientific">Staphylococcus aureus (strain MW2)</name>
    <dbReference type="NCBI Taxonomy" id="196620"/>
    <lineage>
        <taxon>Bacteria</taxon>
        <taxon>Bacillati</taxon>
        <taxon>Bacillota</taxon>
        <taxon>Bacilli</taxon>
        <taxon>Bacillales</taxon>
        <taxon>Staphylococcaceae</taxon>
        <taxon>Staphylococcus</taxon>
    </lineage>
</organism>
<comment type="function">
    <text evidence="1">Catalyzes the phosphorylation of diacylglycerol (DAG) into phosphatidic acid. Is a key enzyme involved in the production of lipoteichoic acid by reintroducing DAG formed from the breakdown of membrane phospholipids into the phosphatidylglycerol biosynthetic pathway.</text>
</comment>
<comment type="catalytic activity">
    <reaction evidence="1">
        <text>a 1,2-diacyl-sn-glycerol + ATP = a 1,2-diacyl-sn-glycero-3-phosphate + ADP + H(+)</text>
        <dbReference type="Rhea" id="RHEA:10272"/>
        <dbReference type="ChEBI" id="CHEBI:15378"/>
        <dbReference type="ChEBI" id="CHEBI:17815"/>
        <dbReference type="ChEBI" id="CHEBI:30616"/>
        <dbReference type="ChEBI" id="CHEBI:58608"/>
        <dbReference type="ChEBI" id="CHEBI:456216"/>
        <dbReference type="EC" id="2.7.1.107"/>
    </reaction>
</comment>
<comment type="cofactor">
    <cofactor evidence="1">
        <name>Mg(2+)</name>
        <dbReference type="ChEBI" id="CHEBI:18420"/>
    </cofactor>
    <text evidence="1">Binds 1 Mg(2+) ion per subunit. This ion appears to have a structural role and is required for catalytic activity.</text>
</comment>
<comment type="subunit">
    <text evidence="1">Homodimer.</text>
</comment>
<comment type="similarity">
    <text evidence="3">Belongs to the diacylglycerol/lipid kinase family.</text>
</comment>
<evidence type="ECO:0000250" key="1">
    <source>
        <dbReference type="UniProtKB" id="Q6GFF9"/>
    </source>
</evidence>
<evidence type="ECO:0000255" key="2">
    <source>
        <dbReference type="PROSITE-ProRule" id="PRU00783"/>
    </source>
</evidence>
<evidence type="ECO:0000305" key="3"/>
<dbReference type="EC" id="2.7.1.107" evidence="1"/>
<dbReference type="EMBL" id="BA000033">
    <property type="protein sequence ID" value="BAB95704.1"/>
    <property type="molecule type" value="Genomic_DNA"/>
</dbReference>
<dbReference type="RefSeq" id="WP_001231451.1">
    <property type="nucleotide sequence ID" value="NC_003923.1"/>
</dbReference>
<dbReference type="SMR" id="Q7A0H3"/>
<dbReference type="KEGG" id="sam:MW1839"/>
<dbReference type="HOGENOM" id="CLU_045532_1_0_9"/>
<dbReference type="GO" id="GO:0005886">
    <property type="term" value="C:plasma membrane"/>
    <property type="evidence" value="ECO:0007669"/>
    <property type="project" value="TreeGrafter"/>
</dbReference>
<dbReference type="GO" id="GO:0005524">
    <property type="term" value="F:ATP binding"/>
    <property type="evidence" value="ECO:0007669"/>
    <property type="project" value="UniProtKB-KW"/>
</dbReference>
<dbReference type="GO" id="GO:0004143">
    <property type="term" value="F:ATP-dependent diacylglycerol kinase activity"/>
    <property type="evidence" value="ECO:0007669"/>
    <property type="project" value="UniProtKB-EC"/>
</dbReference>
<dbReference type="GO" id="GO:0046872">
    <property type="term" value="F:metal ion binding"/>
    <property type="evidence" value="ECO:0007669"/>
    <property type="project" value="UniProtKB-KW"/>
</dbReference>
<dbReference type="GO" id="GO:0008654">
    <property type="term" value="P:phospholipid biosynthetic process"/>
    <property type="evidence" value="ECO:0007669"/>
    <property type="project" value="UniProtKB-KW"/>
</dbReference>
<dbReference type="FunFam" id="2.60.200.40:FF:000015">
    <property type="entry name" value="Diacylglycerol kinase"/>
    <property type="match status" value="1"/>
</dbReference>
<dbReference type="FunFam" id="3.40.50.10330:FF:000008">
    <property type="entry name" value="Probable lipid kinase YegS"/>
    <property type="match status" value="1"/>
</dbReference>
<dbReference type="Gene3D" id="2.60.200.40">
    <property type="match status" value="1"/>
</dbReference>
<dbReference type="Gene3D" id="3.40.50.10330">
    <property type="entry name" value="Probable inorganic polyphosphate/atp-NAD kinase, domain 1"/>
    <property type="match status" value="1"/>
</dbReference>
<dbReference type="InterPro" id="IPR017438">
    <property type="entry name" value="ATP-NAD_kinase_N"/>
</dbReference>
<dbReference type="InterPro" id="IPR005218">
    <property type="entry name" value="Diacylglycerol/lipid_kinase"/>
</dbReference>
<dbReference type="InterPro" id="IPR001206">
    <property type="entry name" value="Diacylglycerol_kinase_cat_dom"/>
</dbReference>
<dbReference type="InterPro" id="IPR050187">
    <property type="entry name" value="Lipid_Phosphate_FormReg"/>
</dbReference>
<dbReference type="InterPro" id="IPR016064">
    <property type="entry name" value="NAD/diacylglycerol_kinase_sf"/>
</dbReference>
<dbReference type="InterPro" id="IPR045540">
    <property type="entry name" value="YegS/DAGK_C"/>
</dbReference>
<dbReference type="NCBIfam" id="NF009603">
    <property type="entry name" value="PRK13055.1"/>
    <property type="match status" value="1"/>
</dbReference>
<dbReference type="NCBIfam" id="NF009874">
    <property type="entry name" value="PRK13337.1"/>
    <property type="match status" value="1"/>
</dbReference>
<dbReference type="NCBIfam" id="TIGR00147">
    <property type="entry name" value="YegS/Rv2252/BmrU family lipid kinase"/>
    <property type="match status" value="1"/>
</dbReference>
<dbReference type="PANTHER" id="PTHR12358:SF106">
    <property type="entry name" value="LIPID KINASE YEGS"/>
    <property type="match status" value="1"/>
</dbReference>
<dbReference type="PANTHER" id="PTHR12358">
    <property type="entry name" value="SPHINGOSINE KINASE"/>
    <property type="match status" value="1"/>
</dbReference>
<dbReference type="Pfam" id="PF00781">
    <property type="entry name" value="DAGK_cat"/>
    <property type="match status" value="1"/>
</dbReference>
<dbReference type="Pfam" id="PF19279">
    <property type="entry name" value="YegS_C"/>
    <property type="match status" value="1"/>
</dbReference>
<dbReference type="SMART" id="SM00046">
    <property type="entry name" value="DAGKc"/>
    <property type="match status" value="1"/>
</dbReference>
<dbReference type="SUPFAM" id="SSF111331">
    <property type="entry name" value="NAD kinase/diacylglycerol kinase-like"/>
    <property type="match status" value="1"/>
</dbReference>
<dbReference type="PROSITE" id="PS50146">
    <property type="entry name" value="DAGK"/>
    <property type="match status" value="1"/>
</dbReference>
<accession>Q7A0H3</accession>
<name>DAGK_STAAW</name>
<feature type="chain" id="PRO_0000386498" description="Diacylglycerol kinase">
    <location>
        <begin position="1"/>
        <end position="315"/>
    </location>
</feature>
<feature type="domain" description="DAGKc" evidence="2">
    <location>
        <begin position="1"/>
        <end position="132"/>
    </location>
</feature>
<feature type="active site" description="Proton acceptor" evidence="1">
    <location>
        <position position="273"/>
    </location>
</feature>
<feature type="binding site" evidence="2">
    <location>
        <begin position="10"/>
        <end position="14"/>
    </location>
    <ligand>
        <name>ATP</name>
        <dbReference type="ChEBI" id="CHEBI:30616"/>
    </ligand>
</feature>
<feature type="binding site" evidence="2">
    <location>
        <position position="41"/>
    </location>
    <ligand>
        <name>ATP</name>
        <dbReference type="ChEBI" id="CHEBI:30616"/>
    </ligand>
</feature>
<feature type="binding site" evidence="2">
    <location>
        <begin position="67"/>
        <end position="73"/>
    </location>
    <ligand>
        <name>ATP</name>
        <dbReference type="ChEBI" id="CHEBI:30616"/>
    </ligand>
</feature>
<feature type="binding site" evidence="2">
    <location>
        <position position="94"/>
    </location>
    <ligand>
        <name>ATP</name>
        <dbReference type="ChEBI" id="CHEBI:30616"/>
    </ligand>
</feature>
<feature type="binding site" evidence="1">
    <location>
        <position position="213"/>
    </location>
    <ligand>
        <name>Mg(2+)</name>
        <dbReference type="ChEBI" id="CHEBI:18420"/>
    </ligand>
</feature>
<feature type="binding site" evidence="1">
    <location>
        <position position="216"/>
    </location>
    <ligand>
        <name>Mg(2+)</name>
        <dbReference type="ChEBI" id="CHEBI:18420"/>
    </ligand>
</feature>
<feature type="binding site" evidence="1">
    <location>
        <position position="218"/>
    </location>
    <ligand>
        <name>Mg(2+)</name>
        <dbReference type="ChEBI" id="CHEBI:18420"/>
    </ligand>
</feature>
<gene>
    <name type="primary">dagK</name>
    <name type="ordered locus">MW1839</name>
</gene>
<protein>
    <recommendedName>
        <fullName>Diacylglycerol kinase</fullName>
        <shortName>DAG kinase</shortName>
        <shortName>DAGK</shortName>
        <ecNumber evidence="1">2.7.1.107</ecNumber>
    </recommendedName>
</protein>